<accession>Q03P20</accession>
<reference key="1">
    <citation type="journal article" date="2006" name="Proc. Natl. Acad. Sci. U.S.A.">
        <title>Comparative genomics of the lactic acid bacteria.</title>
        <authorList>
            <person name="Makarova K.S."/>
            <person name="Slesarev A."/>
            <person name="Wolf Y.I."/>
            <person name="Sorokin A."/>
            <person name="Mirkin B."/>
            <person name="Koonin E.V."/>
            <person name="Pavlov A."/>
            <person name="Pavlova N."/>
            <person name="Karamychev V."/>
            <person name="Polouchine N."/>
            <person name="Shakhova V."/>
            <person name="Grigoriev I."/>
            <person name="Lou Y."/>
            <person name="Rohksar D."/>
            <person name="Lucas S."/>
            <person name="Huang K."/>
            <person name="Goodstein D.M."/>
            <person name="Hawkins T."/>
            <person name="Plengvidhya V."/>
            <person name="Welker D."/>
            <person name="Hughes J."/>
            <person name="Goh Y."/>
            <person name="Benson A."/>
            <person name="Baldwin K."/>
            <person name="Lee J.-H."/>
            <person name="Diaz-Muniz I."/>
            <person name="Dosti B."/>
            <person name="Smeianov V."/>
            <person name="Wechter W."/>
            <person name="Barabote R."/>
            <person name="Lorca G."/>
            <person name="Altermann E."/>
            <person name="Barrangou R."/>
            <person name="Ganesan B."/>
            <person name="Xie Y."/>
            <person name="Rawsthorne H."/>
            <person name="Tamir D."/>
            <person name="Parker C."/>
            <person name="Breidt F."/>
            <person name="Broadbent J.R."/>
            <person name="Hutkins R."/>
            <person name="O'Sullivan D."/>
            <person name="Steele J."/>
            <person name="Unlu G."/>
            <person name="Saier M.H. Jr."/>
            <person name="Klaenhammer T."/>
            <person name="Richardson P."/>
            <person name="Kozyavkin S."/>
            <person name="Weimer B.C."/>
            <person name="Mills D.A."/>
        </authorList>
    </citation>
    <scope>NUCLEOTIDE SEQUENCE [LARGE SCALE GENOMIC DNA]</scope>
    <source>
        <strain>ATCC 367 / BCRC 12310 / CIP 105137 / JCM 1170 / LMG 11437 / NCIMB 947 / NCTC 947</strain>
    </source>
</reference>
<organism>
    <name type="scientific">Levilactobacillus brevis (strain ATCC 367 / BCRC 12310 / CIP 105137 / JCM 1170 / LMG 11437 / NCIMB 947 / NCTC 947)</name>
    <name type="common">Lactobacillus brevis</name>
    <dbReference type="NCBI Taxonomy" id="387344"/>
    <lineage>
        <taxon>Bacteria</taxon>
        <taxon>Bacillati</taxon>
        <taxon>Bacillota</taxon>
        <taxon>Bacilli</taxon>
        <taxon>Lactobacillales</taxon>
        <taxon>Lactobacillaceae</taxon>
        <taxon>Levilactobacillus</taxon>
    </lineage>
</organism>
<dbReference type="EC" id="3.4.19.3" evidence="1"/>
<dbReference type="EMBL" id="CP000416">
    <property type="protein sequence ID" value="ABJ65052.1"/>
    <property type="molecule type" value="Genomic_DNA"/>
</dbReference>
<dbReference type="RefSeq" id="WP_011668672.1">
    <property type="nucleotide sequence ID" value="NC_008497.1"/>
</dbReference>
<dbReference type="SMR" id="Q03P20"/>
<dbReference type="STRING" id="387344.LVIS_1994"/>
<dbReference type="MEROPS" id="C15.001"/>
<dbReference type="KEGG" id="lbr:LVIS_1994"/>
<dbReference type="PATRIC" id="fig|387344.15.peg.1897"/>
<dbReference type="eggNOG" id="COG2039">
    <property type="taxonomic scope" value="Bacteria"/>
</dbReference>
<dbReference type="HOGENOM" id="CLU_043960_4_0_9"/>
<dbReference type="Proteomes" id="UP000001652">
    <property type="component" value="Chromosome"/>
</dbReference>
<dbReference type="GO" id="GO:0005829">
    <property type="term" value="C:cytosol"/>
    <property type="evidence" value="ECO:0007669"/>
    <property type="project" value="InterPro"/>
</dbReference>
<dbReference type="GO" id="GO:0016920">
    <property type="term" value="F:pyroglutamyl-peptidase activity"/>
    <property type="evidence" value="ECO:0007669"/>
    <property type="project" value="UniProtKB-UniRule"/>
</dbReference>
<dbReference type="GO" id="GO:0006508">
    <property type="term" value="P:proteolysis"/>
    <property type="evidence" value="ECO:0007669"/>
    <property type="project" value="UniProtKB-KW"/>
</dbReference>
<dbReference type="CDD" id="cd00501">
    <property type="entry name" value="Peptidase_C15"/>
    <property type="match status" value="1"/>
</dbReference>
<dbReference type="FunFam" id="3.40.630.20:FF:000001">
    <property type="entry name" value="Pyrrolidone-carboxylate peptidase"/>
    <property type="match status" value="1"/>
</dbReference>
<dbReference type="Gene3D" id="3.40.630.20">
    <property type="entry name" value="Peptidase C15, pyroglutamyl peptidase I-like"/>
    <property type="match status" value="1"/>
</dbReference>
<dbReference type="HAMAP" id="MF_00417">
    <property type="entry name" value="Pyrrolid_peptidase"/>
    <property type="match status" value="1"/>
</dbReference>
<dbReference type="InterPro" id="IPR000816">
    <property type="entry name" value="Peptidase_C15"/>
</dbReference>
<dbReference type="InterPro" id="IPR016125">
    <property type="entry name" value="Peptidase_C15-like"/>
</dbReference>
<dbReference type="InterPro" id="IPR036440">
    <property type="entry name" value="Peptidase_C15-like_sf"/>
</dbReference>
<dbReference type="InterPro" id="IPR029762">
    <property type="entry name" value="PGP-I_bact-type"/>
</dbReference>
<dbReference type="InterPro" id="IPR033694">
    <property type="entry name" value="PGPEP1_Cys_AS"/>
</dbReference>
<dbReference type="InterPro" id="IPR033693">
    <property type="entry name" value="PGPEP1_Glu_AS"/>
</dbReference>
<dbReference type="NCBIfam" id="NF009676">
    <property type="entry name" value="PRK13197.1"/>
    <property type="match status" value="1"/>
</dbReference>
<dbReference type="NCBIfam" id="TIGR00504">
    <property type="entry name" value="pyro_pdase"/>
    <property type="match status" value="1"/>
</dbReference>
<dbReference type="PANTHER" id="PTHR23402">
    <property type="entry name" value="PROTEASE FAMILY C15 PYROGLUTAMYL-PEPTIDASE I-RELATED"/>
    <property type="match status" value="1"/>
</dbReference>
<dbReference type="PANTHER" id="PTHR23402:SF1">
    <property type="entry name" value="PYROGLUTAMYL-PEPTIDASE I"/>
    <property type="match status" value="1"/>
</dbReference>
<dbReference type="Pfam" id="PF01470">
    <property type="entry name" value="Peptidase_C15"/>
    <property type="match status" value="1"/>
</dbReference>
<dbReference type="PIRSF" id="PIRSF015592">
    <property type="entry name" value="Prld-crbxl_pptds"/>
    <property type="match status" value="1"/>
</dbReference>
<dbReference type="PRINTS" id="PR00706">
    <property type="entry name" value="PYROGLUPTASE"/>
</dbReference>
<dbReference type="SUPFAM" id="SSF53182">
    <property type="entry name" value="Pyrrolidone carboxyl peptidase (pyroglutamate aminopeptidase)"/>
    <property type="match status" value="1"/>
</dbReference>
<dbReference type="PROSITE" id="PS01334">
    <property type="entry name" value="PYRASE_CYS"/>
    <property type="match status" value="1"/>
</dbReference>
<dbReference type="PROSITE" id="PS01333">
    <property type="entry name" value="PYRASE_GLU"/>
    <property type="match status" value="1"/>
</dbReference>
<protein>
    <recommendedName>
        <fullName evidence="1">Pyrrolidone-carboxylate peptidase</fullName>
        <ecNumber evidence="1">3.4.19.3</ecNumber>
    </recommendedName>
    <alternativeName>
        <fullName evidence="1">5-oxoprolyl-peptidase</fullName>
    </alternativeName>
    <alternativeName>
        <fullName evidence="1">Pyroglutamyl-peptidase I</fullName>
        <shortName evidence="1">PGP-I</shortName>
        <shortName evidence="1">Pyrase</shortName>
    </alternativeName>
</protein>
<gene>
    <name evidence="1" type="primary">pcp</name>
    <name type="ordered locus">LVIS_1994</name>
</gene>
<keyword id="KW-0963">Cytoplasm</keyword>
<keyword id="KW-0378">Hydrolase</keyword>
<keyword id="KW-0645">Protease</keyword>
<keyword id="KW-1185">Reference proteome</keyword>
<keyword id="KW-0788">Thiol protease</keyword>
<sequence>MKLLITGFDPFGGEKTNPAIEAVKRLPAAIAGATVVPLEIPTVFGTCAEVVRQAIITERPDVVLSVGQAGGRSALTPERIAINLDDGRIPDNAGFQPVDQPIQPNGPAAYFTQLPVKAMAQAIRQAGLPSHVSTTAGTYVCNHIMYQVQHLRATEFPQLQAGFIHIPFLPEQVVQRSGVPSLSLTDDVRGLTAAIRAIVIAHAD</sequence>
<evidence type="ECO:0000255" key="1">
    <source>
        <dbReference type="HAMAP-Rule" id="MF_00417"/>
    </source>
</evidence>
<comment type="function">
    <text evidence="1">Removes 5-oxoproline from various penultimate amino acid residues except L-proline.</text>
</comment>
<comment type="catalytic activity">
    <reaction evidence="1">
        <text>Release of an N-terminal pyroglutamyl group from a polypeptide, the second amino acid generally not being Pro.</text>
        <dbReference type="EC" id="3.4.19.3"/>
    </reaction>
</comment>
<comment type="subunit">
    <text evidence="1">Homotetramer.</text>
</comment>
<comment type="subcellular location">
    <subcellularLocation>
        <location evidence="1">Cytoplasm</location>
    </subcellularLocation>
</comment>
<comment type="similarity">
    <text evidence="1">Belongs to the peptidase C15 family.</text>
</comment>
<feature type="chain" id="PRO_1000050130" description="Pyrrolidone-carboxylate peptidase">
    <location>
        <begin position="1"/>
        <end position="204"/>
    </location>
</feature>
<feature type="active site" evidence="1">
    <location>
        <position position="78"/>
    </location>
</feature>
<feature type="active site" evidence="1">
    <location>
        <position position="141"/>
    </location>
</feature>
<feature type="active site" evidence="1">
    <location>
        <position position="165"/>
    </location>
</feature>
<name>PCP_LEVBA</name>
<proteinExistence type="inferred from homology"/>